<organism>
    <name type="scientific">Mus musculus</name>
    <name type="common">Mouse</name>
    <dbReference type="NCBI Taxonomy" id="10090"/>
    <lineage>
        <taxon>Eukaryota</taxon>
        <taxon>Metazoa</taxon>
        <taxon>Chordata</taxon>
        <taxon>Craniata</taxon>
        <taxon>Vertebrata</taxon>
        <taxon>Euteleostomi</taxon>
        <taxon>Mammalia</taxon>
        <taxon>Eutheria</taxon>
        <taxon>Euarchontoglires</taxon>
        <taxon>Glires</taxon>
        <taxon>Rodentia</taxon>
        <taxon>Myomorpha</taxon>
        <taxon>Muroidea</taxon>
        <taxon>Muridae</taxon>
        <taxon>Murinae</taxon>
        <taxon>Mus</taxon>
        <taxon>Mus</taxon>
    </lineage>
</organism>
<sequence>MEYMAESIEHSPGHILCCECGVPISPNPANICVACLRSKVDISQGVPKQVSISFCKQCQRYFQPPASWVQCALESRELLALCLKKIKAPLSKVRLVDAGFVWTEPHSKRLKVKLTIQKEVMNGAILQQVFVVDYVVQSQMCGDCHRVEAKDFWKAVIQVRQKTLHKKTFYYLEQLILKYGMHQNTLRIKEIHDGLDFYYSSKQHAQKMVEFLQGIVPCRYKASQRLISQDIHSNTYNYKSTFSVEIVPICKDNVVCLSPKLAQSLGNMSQICICIRVTSAIHLIDPNTLQVADIDGNTFWSHPFNSLCHPKQLEEFIVIECSTVRDLKRSAGAGVISKKHTLGEVWIQKTSEMNTDKQYFCRTHLGHLLNPGDLVLGFDLANCNLNDEYVNKMNSDRVPDVVLIKKSYDRTKRQRRRNWKLKELARDRENMDTDDERQYQDFLEDLEEDEAIRKHVNIYRDATIPVESDTDDEGAPRISLAEMLEDLHISQDATGEEGASMMS</sequence>
<accession>Q99L48</accession>
<accession>Q3UPR1</accession>
<accession>Q8BM61</accession>
<dbReference type="EMBL" id="AK034772">
    <property type="protein sequence ID" value="BAC28829.1"/>
    <property type="molecule type" value="mRNA"/>
</dbReference>
<dbReference type="EMBL" id="AK088667">
    <property type="protein sequence ID" value="BAC40491.1"/>
    <property type="molecule type" value="mRNA"/>
</dbReference>
<dbReference type="EMBL" id="AK143289">
    <property type="protein sequence ID" value="BAE25334.1"/>
    <property type="molecule type" value="mRNA"/>
</dbReference>
<dbReference type="EMBL" id="AK145248">
    <property type="protein sequence ID" value="BAE26326.1"/>
    <property type="molecule type" value="mRNA"/>
</dbReference>
<dbReference type="EMBL" id="AK166283">
    <property type="protein sequence ID" value="BAE38680.1"/>
    <property type="molecule type" value="mRNA"/>
</dbReference>
<dbReference type="EMBL" id="BC003842">
    <property type="protein sequence ID" value="AAH03842.1"/>
    <property type="molecule type" value="mRNA"/>
</dbReference>
<dbReference type="CCDS" id="CCDS17407.1">
    <molecule id="Q99L48-1"/>
</dbReference>
<dbReference type="RefSeq" id="NP_598548.1">
    <molecule id="Q99L48-1"/>
    <property type="nucleotide sequence ID" value="NM_133787.3"/>
</dbReference>
<dbReference type="SMR" id="Q99L48"/>
<dbReference type="BioGRID" id="220607">
    <property type="interactions" value="4"/>
</dbReference>
<dbReference type="FunCoup" id="Q99L48">
    <property type="interactions" value="4237"/>
</dbReference>
<dbReference type="STRING" id="10090.ENSMUSP00000029358"/>
<dbReference type="GlyGen" id="Q99L48">
    <property type="glycosylation" value="1 site, 1 O-linked glycan (1 site)"/>
</dbReference>
<dbReference type="iPTMnet" id="Q99L48"/>
<dbReference type="PhosphoSitePlus" id="Q99L48"/>
<dbReference type="SwissPalm" id="Q99L48"/>
<dbReference type="jPOST" id="Q99L48"/>
<dbReference type="PaxDb" id="10090-ENSMUSP00000029358"/>
<dbReference type="PeptideAtlas" id="Q99L48"/>
<dbReference type="ProteomicsDB" id="293862">
    <molecule id="Q99L48-1"/>
</dbReference>
<dbReference type="ProteomicsDB" id="293863">
    <molecule id="Q99L48-2"/>
</dbReference>
<dbReference type="Pumba" id="Q99L48"/>
<dbReference type="Antibodypedia" id="33677">
    <property type="antibodies" value="127 antibodies from 27 providers"/>
</dbReference>
<dbReference type="DNASU" id="97112"/>
<dbReference type="Ensembl" id="ENSMUST00000029358.15">
    <molecule id="Q99L48-1"/>
    <property type="protein sequence ID" value="ENSMUSP00000029358.9"/>
    <property type="gene ID" value="ENSMUSG00000027787.15"/>
</dbReference>
<dbReference type="GeneID" id="97112"/>
<dbReference type="KEGG" id="mmu:97112"/>
<dbReference type="UCSC" id="uc008pmk.1">
    <molecule id="Q99L48-2"/>
    <property type="organism name" value="mouse"/>
</dbReference>
<dbReference type="UCSC" id="uc008pml.1">
    <molecule id="Q99L48-1"/>
    <property type="organism name" value="mouse"/>
</dbReference>
<dbReference type="AGR" id="MGI:2140103"/>
<dbReference type="CTD" id="51068"/>
<dbReference type="MGI" id="MGI:2140103">
    <property type="gene designation" value="Nmd3"/>
</dbReference>
<dbReference type="VEuPathDB" id="HostDB:ENSMUSG00000027787"/>
<dbReference type="eggNOG" id="KOG2613">
    <property type="taxonomic scope" value="Eukaryota"/>
</dbReference>
<dbReference type="GeneTree" id="ENSGT00390000005104"/>
<dbReference type="HOGENOM" id="CLU_027444_2_0_1"/>
<dbReference type="InParanoid" id="Q99L48"/>
<dbReference type="OMA" id="VILVRKH"/>
<dbReference type="OrthoDB" id="203821at2759"/>
<dbReference type="PhylomeDB" id="Q99L48"/>
<dbReference type="TreeFam" id="TF105744"/>
<dbReference type="BioGRID-ORCS" id="97112">
    <property type="hits" value="25 hits in 77 CRISPR screens"/>
</dbReference>
<dbReference type="PRO" id="PR:Q99L48"/>
<dbReference type="Proteomes" id="UP000000589">
    <property type="component" value="Chromosome 3"/>
</dbReference>
<dbReference type="RNAct" id="Q99L48">
    <property type="molecule type" value="protein"/>
</dbReference>
<dbReference type="Bgee" id="ENSMUSG00000027787">
    <property type="expression patterns" value="Expressed in ectoplacental cone and 273 other cell types or tissues"/>
</dbReference>
<dbReference type="ExpressionAtlas" id="Q99L48">
    <property type="expression patterns" value="baseline and differential"/>
</dbReference>
<dbReference type="GO" id="GO:0005737">
    <property type="term" value="C:cytoplasm"/>
    <property type="evidence" value="ECO:0000266"/>
    <property type="project" value="MGI"/>
</dbReference>
<dbReference type="GO" id="GO:0005730">
    <property type="term" value="C:nucleolus"/>
    <property type="evidence" value="ECO:0007669"/>
    <property type="project" value="Ensembl"/>
</dbReference>
<dbReference type="GO" id="GO:0005654">
    <property type="term" value="C:nucleoplasm"/>
    <property type="evidence" value="ECO:0007669"/>
    <property type="project" value="Ensembl"/>
</dbReference>
<dbReference type="GO" id="GO:0005634">
    <property type="term" value="C:nucleus"/>
    <property type="evidence" value="ECO:0000266"/>
    <property type="project" value="MGI"/>
</dbReference>
<dbReference type="GO" id="GO:0030674">
    <property type="term" value="F:protein-macromolecule adaptor activity"/>
    <property type="evidence" value="ECO:0007669"/>
    <property type="project" value="Ensembl"/>
</dbReference>
<dbReference type="GO" id="GO:0043023">
    <property type="term" value="F:ribosomal large subunit binding"/>
    <property type="evidence" value="ECO:0000266"/>
    <property type="project" value="MGI"/>
</dbReference>
<dbReference type="GO" id="GO:1904751">
    <property type="term" value="P:positive regulation of protein localization to nucleolus"/>
    <property type="evidence" value="ECO:0007669"/>
    <property type="project" value="Ensembl"/>
</dbReference>
<dbReference type="GO" id="GO:1902680">
    <property type="term" value="P:positive regulation of RNA biosynthetic process"/>
    <property type="evidence" value="ECO:0007669"/>
    <property type="project" value="Ensembl"/>
</dbReference>
<dbReference type="GO" id="GO:0015031">
    <property type="term" value="P:protein transport"/>
    <property type="evidence" value="ECO:0007669"/>
    <property type="project" value="UniProtKB-KW"/>
</dbReference>
<dbReference type="GO" id="GO:0000055">
    <property type="term" value="P:ribosomal large subunit export from nucleus"/>
    <property type="evidence" value="ECO:0000266"/>
    <property type="project" value="MGI"/>
</dbReference>
<dbReference type="InterPro" id="IPR039768">
    <property type="entry name" value="Nmd3"/>
</dbReference>
<dbReference type="InterPro" id="IPR007064">
    <property type="entry name" value="Nmd3_N"/>
</dbReference>
<dbReference type="InterPro" id="IPR048898">
    <property type="entry name" value="NMD3_OB"/>
</dbReference>
<dbReference type="InterPro" id="IPR048899">
    <property type="entry name" value="NMD_SH3"/>
</dbReference>
<dbReference type="PANTHER" id="PTHR12746:SF2">
    <property type="entry name" value="60S RIBOSOMAL EXPORT PROTEIN NMD3"/>
    <property type="match status" value="1"/>
</dbReference>
<dbReference type="PANTHER" id="PTHR12746">
    <property type="entry name" value="NONSENSE-MEDIATED MRNA DECAY PROTEIN 3"/>
    <property type="match status" value="1"/>
</dbReference>
<dbReference type="Pfam" id="PF04981">
    <property type="entry name" value="NMD3"/>
    <property type="match status" value="1"/>
</dbReference>
<dbReference type="Pfam" id="PF21192">
    <property type="entry name" value="NMD3_OB"/>
    <property type="match status" value="1"/>
</dbReference>
<dbReference type="Pfam" id="PF21193">
    <property type="entry name" value="NMD_SH3"/>
    <property type="match status" value="1"/>
</dbReference>
<keyword id="KW-0007">Acetylation</keyword>
<keyword id="KW-0025">Alternative splicing</keyword>
<keyword id="KW-0963">Cytoplasm</keyword>
<keyword id="KW-0539">Nucleus</keyword>
<keyword id="KW-0597">Phosphoprotein</keyword>
<keyword id="KW-0653">Protein transport</keyword>
<keyword id="KW-1185">Reference proteome</keyword>
<keyword id="KW-0813">Transport</keyword>
<evidence type="ECO:0000250" key="1">
    <source>
        <dbReference type="UniProtKB" id="Q96D46"/>
    </source>
</evidence>
<evidence type="ECO:0000303" key="2">
    <source>
    </source>
</evidence>
<evidence type="ECO:0000305" key="3"/>
<evidence type="ECO:0007744" key="4">
    <source>
    </source>
</evidence>
<comment type="function">
    <text evidence="1">Acts as an adapter for the XPO1/CRM1-mediated export of the 60S ribosomal subunit.</text>
</comment>
<comment type="subunit">
    <text evidence="1">Found in a 60S ribosomal subunit export complex with RAN and XPO1. Interacts with XPO1. Associates with pre-60S ribosomal particles.</text>
</comment>
<comment type="subcellular location">
    <subcellularLocation>
        <location evidence="1">Cytoplasm</location>
    </subcellularLocation>
    <subcellularLocation>
        <location evidence="1">Nucleus</location>
    </subcellularLocation>
    <text evidence="1">Shuttles between the nucleus/nucleolus and the cytoplasm in a XPO1/CRM1-dependent manner.</text>
</comment>
<comment type="alternative products">
    <event type="alternative splicing"/>
    <isoform>
        <id>Q99L48-1</id>
        <name>1</name>
        <sequence type="displayed"/>
    </isoform>
    <isoform>
        <id>Q99L48-2</id>
        <name>2</name>
        <sequence type="described" ref="VSP_032020 VSP_032021"/>
    </isoform>
</comment>
<comment type="similarity">
    <text evidence="3">Belongs to the NMD3 family.</text>
</comment>
<reference key="1">
    <citation type="journal article" date="2005" name="Science">
        <title>The transcriptional landscape of the mammalian genome.</title>
        <authorList>
            <person name="Carninci P."/>
            <person name="Kasukawa T."/>
            <person name="Katayama S."/>
            <person name="Gough J."/>
            <person name="Frith M.C."/>
            <person name="Maeda N."/>
            <person name="Oyama R."/>
            <person name="Ravasi T."/>
            <person name="Lenhard B."/>
            <person name="Wells C."/>
            <person name="Kodzius R."/>
            <person name="Shimokawa K."/>
            <person name="Bajic V.B."/>
            <person name="Brenner S.E."/>
            <person name="Batalov S."/>
            <person name="Forrest A.R."/>
            <person name="Zavolan M."/>
            <person name="Davis M.J."/>
            <person name="Wilming L.G."/>
            <person name="Aidinis V."/>
            <person name="Allen J.E."/>
            <person name="Ambesi-Impiombato A."/>
            <person name="Apweiler R."/>
            <person name="Aturaliya R.N."/>
            <person name="Bailey T.L."/>
            <person name="Bansal M."/>
            <person name="Baxter L."/>
            <person name="Beisel K.W."/>
            <person name="Bersano T."/>
            <person name="Bono H."/>
            <person name="Chalk A.M."/>
            <person name="Chiu K.P."/>
            <person name="Choudhary V."/>
            <person name="Christoffels A."/>
            <person name="Clutterbuck D.R."/>
            <person name="Crowe M.L."/>
            <person name="Dalla E."/>
            <person name="Dalrymple B.P."/>
            <person name="de Bono B."/>
            <person name="Della Gatta G."/>
            <person name="di Bernardo D."/>
            <person name="Down T."/>
            <person name="Engstrom P."/>
            <person name="Fagiolini M."/>
            <person name="Faulkner G."/>
            <person name="Fletcher C.F."/>
            <person name="Fukushima T."/>
            <person name="Furuno M."/>
            <person name="Futaki S."/>
            <person name="Gariboldi M."/>
            <person name="Georgii-Hemming P."/>
            <person name="Gingeras T.R."/>
            <person name="Gojobori T."/>
            <person name="Green R.E."/>
            <person name="Gustincich S."/>
            <person name="Harbers M."/>
            <person name="Hayashi Y."/>
            <person name="Hensch T.K."/>
            <person name="Hirokawa N."/>
            <person name="Hill D."/>
            <person name="Huminiecki L."/>
            <person name="Iacono M."/>
            <person name="Ikeo K."/>
            <person name="Iwama A."/>
            <person name="Ishikawa T."/>
            <person name="Jakt M."/>
            <person name="Kanapin A."/>
            <person name="Katoh M."/>
            <person name="Kawasawa Y."/>
            <person name="Kelso J."/>
            <person name="Kitamura H."/>
            <person name="Kitano H."/>
            <person name="Kollias G."/>
            <person name="Krishnan S.P."/>
            <person name="Kruger A."/>
            <person name="Kummerfeld S.K."/>
            <person name="Kurochkin I.V."/>
            <person name="Lareau L.F."/>
            <person name="Lazarevic D."/>
            <person name="Lipovich L."/>
            <person name="Liu J."/>
            <person name="Liuni S."/>
            <person name="McWilliam S."/>
            <person name="Madan Babu M."/>
            <person name="Madera M."/>
            <person name="Marchionni L."/>
            <person name="Matsuda H."/>
            <person name="Matsuzawa S."/>
            <person name="Miki H."/>
            <person name="Mignone F."/>
            <person name="Miyake S."/>
            <person name="Morris K."/>
            <person name="Mottagui-Tabar S."/>
            <person name="Mulder N."/>
            <person name="Nakano N."/>
            <person name="Nakauchi H."/>
            <person name="Ng P."/>
            <person name="Nilsson R."/>
            <person name="Nishiguchi S."/>
            <person name="Nishikawa S."/>
            <person name="Nori F."/>
            <person name="Ohara O."/>
            <person name="Okazaki Y."/>
            <person name="Orlando V."/>
            <person name="Pang K.C."/>
            <person name="Pavan W.J."/>
            <person name="Pavesi G."/>
            <person name="Pesole G."/>
            <person name="Petrovsky N."/>
            <person name="Piazza S."/>
            <person name="Reed J."/>
            <person name="Reid J.F."/>
            <person name="Ring B.Z."/>
            <person name="Ringwald M."/>
            <person name="Rost B."/>
            <person name="Ruan Y."/>
            <person name="Salzberg S.L."/>
            <person name="Sandelin A."/>
            <person name="Schneider C."/>
            <person name="Schoenbach C."/>
            <person name="Sekiguchi K."/>
            <person name="Semple C.A."/>
            <person name="Seno S."/>
            <person name="Sessa L."/>
            <person name="Sheng Y."/>
            <person name="Shibata Y."/>
            <person name="Shimada H."/>
            <person name="Shimada K."/>
            <person name="Silva D."/>
            <person name="Sinclair B."/>
            <person name="Sperling S."/>
            <person name="Stupka E."/>
            <person name="Sugiura K."/>
            <person name="Sultana R."/>
            <person name="Takenaka Y."/>
            <person name="Taki K."/>
            <person name="Tammoja K."/>
            <person name="Tan S.L."/>
            <person name="Tang S."/>
            <person name="Taylor M.S."/>
            <person name="Tegner J."/>
            <person name="Teichmann S.A."/>
            <person name="Ueda H.R."/>
            <person name="van Nimwegen E."/>
            <person name="Verardo R."/>
            <person name="Wei C.L."/>
            <person name="Yagi K."/>
            <person name="Yamanishi H."/>
            <person name="Zabarovsky E."/>
            <person name="Zhu S."/>
            <person name="Zimmer A."/>
            <person name="Hide W."/>
            <person name="Bult C."/>
            <person name="Grimmond S.M."/>
            <person name="Teasdale R.D."/>
            <person name="Liu E.T."/>
            <person name="Brusic V."/>
            <person name="Quackenbush J."/>
            <person name="Wahlestedt C."/>
            <person name="Mattick J.S."/>
            <person name="Hume D.A."/>
            <person name="Kai C."/>
            <person name="Sasaki D."/>
            <person name="Tomaru Y."/>
            <person name="Fukuda S."/>
            <person name="Kanamori-Katayama M."/>
            <person name="Suzuki M."/>
            <person name="Aoki J."/>
            <person name="Arakawa T."/>
            <person name="Iida J."/>
            <person name="Imamura K."/>
            <person name="Itoh M."/>
            <person name="Kato T."/>
            <person name="Kawaji H."/>
            <person name="Kawagashira N."/>
            <person name="Kawashima T."/>
            <person name="Kojima M."/>
            <person name="Kondo S."/>
            <person name="Konno H."/>
            <person name="Nakano K."/>
            <person name="Ninomiya N."/>
            <person name="Nishio T."/>
            <person name="Okada M."/>
            <person name="Plessy C."/>
            <person name="Shibata K."/>
            <person name="Shiraki T."/>
            <person name="Suzuki S."/>
            <person name="Tagami M."/>
            <person name="Waki K."/>
            <person name="Watahiki A."/>
            <person name="Okamura-Oho Y."/>
            <person name="Suzuki H."/>
            <person name="Kawai J."/>
            <person name="Hayashizaki Y."/>
        </authorList>
    </citation>
    <scope>NUCLEOTIDE SEQUENCE [LARGE SCALE MRNA] (ISOFORMS 1 AND 2)</scope>
    <source>
        <strain>C57BL/6J</strain>
        <strain>NOD</strain>
        <tissue>Embryo</tissue>
        <tissue>Mammary gland</tissue>
        <tissue>Oviduct</tissue>
        <tissue>Thymus</tissue>
    </source>
</reference>
<reference key="2">
    <citation type="journal article" date="2004" name="Genome Res.">
        <title>The status, quality, and expansion of the NIH full-length cDNA project: the Mammalian Gene Collection (MGC).</title>
        <authorList>
            <consortium name="The MGC Project Team"/>
        </authorList>
    </citation>
    <scope>NUCLEOTIDE SEQUENCE [LARGE SCALE MRNA] (ISOFORM 1)</scope>
    <source>
        <strain>Czech II</strain>
        <tissue>Mammary tumor</tissue>
    </source>
</reference>
<reference key="3">
    <citation type="journal article" date="2010" name="Cell">
        <title>A tissue-specific atlas of mouse protein phosphorylation and expression.</title>
        <authorList>
            <person name="Huttlin E.L."/>
            <person name="Jedrychowski M.P."/>
            <person name="Elias J.E."/>
            <person name="Goswami T."/>
            <person name="Rad R."/>
            <person name="Beausoleil S.A."/>
            <person name="Villen J."/>
            <person name="Haas W."/>
            <person name="Sowa M.E."/>
            <person name="Gygi S.P."/>
        </authorList>
    </citation>
    <scope>PHOSPHORYLATION [LARGE SCALE ANALYSIS] AT SER-468 AND THR-470</scope>
    <scope>IDENTIFICATION BY MASS SPECTROMETRY [LARGE SCALE ANALYSIS]</scope>
    <source>
        <tissue>Kidney</tissue>
        <tissue>Liver</tissue>
        <tissue>Pancreas</tissue>
        <tissue>Spleen</tissue>
        <tissue>Testis</tissue>
    </source>
</reference>
<name>NMD3_MOUSE</name>
<protein>
    <recommendedName>
        <fullName>60S ribosomal export protein NMD3</fullName>
    </recommendedName>
</protein>
<feature type="chain" id="PRO_0000323562" description="60S ribosomal export protein NMD3">
    <location>
        <begin position="1"/>
        <end position="503"/>
    </location>
</feature>
<feature type="region of interest" description="Necessary for the nuclear export of the 60S ribosomal subunit" evidence="1">
    <location>
        <begin position="425"/>
        <end position="503"/>
    </location>
</feature>
<feature type="short sequence motif" description="Nuclear and nucleolar localization signal" evidence="1">
    <location>
        <begin position="405"/>
        <end position="422"/>
    </location>
</feature>
<feature type="short sequence motif" description="Nuclear export signal" evidence="1">
    <location>
        <begin position="480"/>
        <end position="489"/>
    </location>
</feature>
<feature type="modified residue" description="N-acetylmethionine" evidence="1">
    <location>
        <position position="1"/>
    </location>
</feature>
<feature type="modified residue" description="Phosphoserine" evidence="1">
    <location>
        <position position="258"/>
    </location>
</feature>
<feature type="modified residue" description="Phosphothreonine" evidence="1">
    <location>
        <position position="433"/>
    </location>
</feature>
<feature type="modified residue" description="Phosphoserine" evidence="4">
    <location>
        <position position="468"/>
    </location>
</feature>
<feature type="modified residue" description="Phosphothreonine" evidence="4">
    <location>
        <position position="470"/>
    </location>
</feature>
<feature type="splice variant" id="VSP_032020" description="In isoform 2." evidence="2">
    <original>DGLDFYYS</original>
    <variation>GEFKFKRI</variation>
    <location>
        <begin position="193"/>
        <end position="200"/>
    </location>
</feature>
<feature type="splice variant" id="VSP_032021" description="In isoform 2." evidence="2">
    <location>
        <begin position="201"/>
        <end position="503"/>
    </location>
</feature>
<proteinExistence type="evidence at protein level"/>
<gene>
    <name type="primary">Nmd3</name>
</gene>